<feature type="chain" id="PRO_1000021177" description="4-hydroxy-3-methylbut-2-enyl diphosphate reductase">
    <location>
        <begin position="1"/>
        <end position="316"/>
    </location>
</feature>
<feature type="active site" description="Proton donor" evidence="1">
    <location>
        <position position="126"/>
    </location>
</feature>
<feature type="binding site" evidence="1">
    <location>
        <position position="12"/>
    </location>
    <ligand>
        <name>[4Fe-4S] cluster</name>
        <dbReference type="ChEBI" id="CHEBI:49883"/>
    </ligand>
</feature>
<feature type="binding site" evidence="1">
    <location>
        <position position="41"/>
    </location>
    <ligand>
        <name>(2E)-4-hydroxy-3-methylbut-2-enyl diphosphate</name>
        <dbReference type="ChEBI" id="CHEBI:128753"/>
    </ligand>
</feature>
<feature type="binding site" evidence="1">
    <location>
        <position position="41"/>
    </location>
    <ligand>
        <name>dimethylallyl diphosphate</name>
        <dbReference type="ChEBI" id="CHEBI:57623"/>
    </ligand>
</feature>
<feature type="binding site" evidence="1">
    <location>
        <position position="41"/>
    </location>
    <ligand>
        <name>isopentenyl diphosphate</name>
        <dbReference type="ChEBI" id="CHEBI:128769"/>
    </ligand>
</feature>
<feature type="binding site" evidence="1">
    <location>
        <position position="74"/>
    </location>
    <ligand>
        <name>(2E)-4-hydroxy-3-methylbut-2-enyl diphosphate</name>
        <dbReference type="ChEBI" id="CHEBI:128753"/>
    </ligand>
</feature>
<feature type="binding site" evidence="1">
    <location>
        <position position="74"/>
    </location>
    <ligand>
        <name>dimethylallyl diphosphate</name>
        <dbReference type="ChEBI" id="CHEBI:57623"/>
    </ligand>
</feature>
<feature type="binding site" evidence="1">
    <location>
        <position position="74"/>
    </location>
    <ligand>
        <name>isopentenyl diphosphate</name>
        <dbReference type="ChEBI" id="CHEBI:128769"/>
    </ligand>
</feature>
<feature type="binding site" evidence="1">
    <location>
        <position position="96"/>
    </location>
    <ligand>
        <name>[4Fe-4S] cluster</name>
        <dbReference type="ChEBI" id="CHEBI:49883"/>
    </ligand>
</feature>
<feature type="binding site" evidence="1">
    <location>
        <position position="124"/>
    </location>
    <ligand>
        <name>(2E)-4-hydroxy-3-methylbut-2-enyl diphosphate</name>
        <dbReference type="ChEBI" id="CHEBI:128753"/>
    </ligand>
</feature>
<feature type="binding site" evidence="1">
    <location>
        <position position="124"/>
    </location>
    <ligand>
        <name>dimethylallyl diphosphate</name>
        <dbReference type="ChEBI" id="CHEBI:57623"/>
    </ligand>
</feature>
<feature type="binding site" evidence="1">
    <location>
        <position position="124"/>
    </location>
    <ligand>
        <name>isopentenyl diphosphate</name>
        <dbReference type="ChEBI" id="CHEBI:128769"/>
    </ligand>
</feature>
<feature type="binding site" evidence="1">
    <location>
        <position position="167"/>
    </location>
    <ligand>
        <name>(2E)-4-hydroxy-3-methylbut-2-enyl diphosphate</name>
        <dbReference type="ChEBI" id="CHEBI:128753"/>
    </ligand>
</feature>
<feature type="binding site" evidence="1">
    <location>
        <position position="197"/>
    </location>
    <ligand>
        <name>[4Fe-4S] cluster</name>
        <dbReference type="ChEBI" id="CHEBI:49883"/>
    </ligand>
</feature>
<feature type="binding site" evidence="1">
    <location>
        <position position="225"/>
    </location>
    <ligand>
        <name>(2E)-4-hydroxy-3-methylbut-2-enyl diphosphate</name>
        <dbReference type="ChEBI" id="CHEBI:128753"/>
    </ligand>
</feature>
<feature type="binding site" evidence="1">
    <location>
        <position position="225"/>
    </location>
    <ligand>
        <name>dimethylallyl diphosphate</name>
        <dbReference type="ChEBI" id="CHEBI:57623"/>
    </ligand>
</feature>
<feature type="binding site" evidence="1">
    <location>
        <position position="225"/>
    </location>
    <ligand>
        <name>isopentenyl diphosphate</name>
        <dbReference type="ChEBI" id="CHEBI:128769"/>
    </ligand>
</feature>
<feature type="binding site" evidence="1">
    <location>
        <position position="226"/>
    </location>
    <ligand>
        <name>(2E)-4-hydroxy-3-methylbut-2-enyl diphosphate</name>
        <dbReference type="ChEBI" id="CHEBI:128753"/>
    </ligand>
</feature>
<feature type="binding site" evidence="1">
    <location>
        <position position="226"/>
    </location>
    <ligand>
        <name>dimethylallyl diphosphate</name>
        <dbReference type="ChEBI" id="CHEBI:57623"/>
    </ligand>
</feature>
<feature type="binding site" evidence="1">
    <location>
        <position position="226"/>
    </location>
    <ligand>
        <name>isopentenyl diphosphate</name>
        <dbReference type="ChEBI" id="CHEBI:128769"/>
    </ligand>
</feature>
<feature type="binding site" evidence="1">
    <location>
        <position position="227"/>
    </location>
    <ligand>
        <name>(2E)-4-hydroxy-3-methylbut-2-enyl diphosphate</name>
        <dbReference type="ChEBI" id="CHEBI:128753"/>
    </ligand>
</feature>
<feature type="binding site" evidence="1">
    <location>
        <position position="227"/>
    </location>
    <ligand>
        <name>dimethylallyl diphosphate</name>
        <dbReference type="ChEBI" id="CHEBI:57623"/>
    </ligand>
</feature>
<feature type="binding site" evidence="1">
    <location>
        <position position="227"/>
    </location>
    <ligand>
        <name>isopentenyl diphosphate</name>
        <dbReference type="ChEBI" id="CHEBI:128769"/>
    </ligand>
</feature>
<feature type="binding site" evidence="1">
    <location>
        <position position="269"/>
    </location>
    <ligand>
        <name>(2E)-4-hydroxy-3-methylbut-2-enyl diphosphate</name>
        <dbReference type="ChEBI" id="CHEBI:128753"/>
    </ligand>
</feature>
<feature type="binding site" evidence="1">
    <location>
        <position position="269"/>
    </location>
    <ligand>
        <name>dimethylallyl diphosphate</name>
        <dbReference type="ChEBI" id="CHEBI:57623"/>
    </ligand>
</feature>
<feature type="binding site" evidence="1">
    <location>
        <position position="269"/>
    </location>
    <ligand>
        <name>isopentenyl diphosphate</name>
        <dbReference type="ChEBI" id="CHEBI:128769"/>
    </ligand>
</feature>
<evidence type="ECO:0000255" key="1">
    <source>
        <dbReference type="HAMAP-Rule" id="MF_00191"/>
    </source>
</evidence>
<reference key="1">
    <citation type="journal article" date="2005" name="Nucleic Acids Res.">
        <title>Genome dynamics and diversity of Shigella species, the etiologic agents of bacillary dysentery.</title>
        <authorList>
            <person name="Yang F."/>
            <person name="Yang J."/>
            <person name="Zhang X."/>
            <person name="Chen L."/>
            <person name="Jiang Y."/>
            <person name="Yan Y."/>
            <person name="Tang X."/>
            <person name="Wang J."/>
            <person name="Xiong Z."/>
            <person name="Dong J."/>
            <person name="Xue Y."/>
            <person name="Zhu Y."/>
            <person name="Xu X."/>
            <person name="Sun L."/>
            <person name="Chen S."/>
            <person name="Nie H."/>
            <person name="Peng J."/>
            <person name="Xu J."/>
            <person name="Wang Y."/>
            <person name="Yuan Z."/>
            <person name="Wen Y."/>
            <person name="Yao Z."/>
            <person name="Shen Y."/>
            <person name="Qiang B."/>
            <person name="Hou Y."/>
            <person name="Yu J."/>
            <person name="Jin Q."/>
        </authorList>
    </citation>
    <scope>NUCLEOTIDE SEQUENCE [LARGE SCALE GENOMIC DNA]</scope>
    <source>
        <strain>Sb227</strain>
    </source>
</reference>
<gene>
    <name evidence="1" type="primary">ispH</name>
    <name type="ordered locus">SBO_0028</name>
</gene>
<organism>
    <name type="scientific">Shigella boydii serotype 4 (strain Sb227)</name>
    <dbReference type="NCBI Taxonomy" id="300268"/>
    <lineage>
        <taxon>Bacteria</taxon>
        <taxon>Pseudomonadati</taxon>
        <taxon>Pseudomonadota</taxon>
        <taxon>Gammaproteobacteria</taxon>
        <taxon>Enterobacterales</taxon>
        <taxon>Enterobacteriaceae</taxon>
        <taxon>Shigella</taxon>
    </lineage>
</organism>
<comment type="function">
    <text evidence="1">Catalyzes the conversion of 1-hydroxy-2-methyl-2-(E)-butenyl 4-diphosphate (HMBPP) into a mixture of isopentenyl diphosphate (IPP) and dimethylallyl diphosphate (DMAPP). Acts in the terminal step of the DOXP/MEP pathway for isoprenoid precursor biosynthesis.</text>
</comment>
<comment type="catalytic activity">
    <reaction evidence="1">
        <text>isopentenyl diphosphate + 2 oxidized [2Fe-2S]-[ferredoxin] + H2O = (2E)-4-hydroxy-3-methylbut-2-enyl diphosphate + 2 reduced [2Fe-2S]-[ferredoxin] + 2 H(+)</text>
        <dbReference type="Rhea" id="RHEA:24488"/>
        <dbReference type="Rhea" id="RHEA-COMP:10000"/>
        <dbReference type="Rhea" id="RHEA-COMP:10001"/>
        <dbReference type="ChEBI" id="CHEBI:15377"/>
        <dbReference type="ChEBI" id="CHEBI:15378"/>
        <dbReference type="ChEBI" id="CHEBI:33737"/>
        <dbReference type="ChEBI" id="CHEBI:33738"/>
        <dbReference type="ChEBI" id="CHEBI:128753"/>
        <dbReference type="ChEBI" id="CHEBI:128769"/>
        <dbReference type="EC" id="1.17.7.4"/>
    </reaction>
</comment>
<comment type="catalytic activity">
    <reaction evidence="1">
        <text>dimethylallyl diphosphate + 2 oxidized [2Fe-2S]-[ferredoxin] + H2O = (2E)-4-hydroxy-3-methylbut-2-enyl diphosphate + 2 reduced [2Fe-2S]-[ferredoxin] + 2 H(+)</text>
        <dbReference type="Rhea" id="RHEA:24825"/>
        <dbReference type="Rhea" id="RHEA-COMP:10000"/>
        <dbReference type="Rhea" id="RHEA-COMP:10001"/>
        <dbReference type="ChEBI" id="CHEBI:15377"/>
        <dbReference type="ChEBI" id="CHEBI:15378"/>
        <dbReference type="ChEBI" id="CHEBI:33737"/>
        <dbReference type="ChEBI" id="CHEBI:33738"/>
        <dbReference type="ChEBI" id="CHEBI:57623"/>
        <dbReference type="ChEBI" id="CHEBI:128753"/>
        <dbReference type="EC" id="1.17.7.4"/>
    </reaction>
</comment>
<comment type="cofactor">
    <cofactor evidence="1">
        <name>[4Fe-4S] cluster</name>
        <dbReference type="ChEBI" id="CHEBI:49883"/>
    </cofactor>
    <text evidence="1">Binds 1 [4Fe-4S] cluster per subunit.</text>
</comment>
<comment type="pathway">
    <text evidence="1">Isoprenoid biosynthesis; dimethylallyl diphosphate biosynthesis; dimethylallyl diphosphate from (2E)-4-hydroxy-3-methylbutenyl diphosphate: step 1/1.</text>
</comment>
<comment type="pathway">
    <text evidence="1">Isoprenoid biosynthesis; isopentenyl diphosphate biosynthesis via DXP pathway; isopentenyl diphosphate from 1-deoxy-D-xylulose 5-phosphate: step 6/6.</text>
</comment>
<comment type="subunit">
    <text evidence="1">Homodimer.</text>
</comment>
<comment type="similarity">
    <text evidence="1">Belongs to the IspH family.</text>
</comment>
<dbReference type="EC" id="1.17.7.4" evidence="1"/>
<dbReference type="EMBL" id="CP000036">
    <property type="protein sequence ID" value="ABB64764.1"/>
    <property type="molecule type" value="Genomic_DNA"/>
</dbReference>
<dbReference type="RefSeq" id="WP_001166395.1">
    <property type="nucleotide sequence ID" value="NC_007613.1"/>
</dbReference>
<dbReference type="SMR" id="Q326J4"/>
<dbReference type="GeneID" id="93777407"/>
<dbReference type="KEGG" id="sbo:SBO_0028"/>
<dbReference type="HOGENOM" id="CLU_027486_1_0_6"/>
<dbReference type="UniPathway" id="UPA00056">
    <property type="reaction ID" value="UER00097"/>
</dbReference>
<dbReference type="UniPathway" id="UPA00059">
    <property type="reaction ID" value="UER00105"/>
</dbReference>
<dbReference type="Proteomes" id="UP000007067">
    <property type="component" value="Chromosome"/>
</dbReference>
<dbReference type="GO" id="GO:0051539">
    <property type="term" value="F:4 iron, 4 sulfur cluster binding"/>
    <property type="evidence" value="ECO:0007669"/>
    <property type="project" value="UniProtKB-UniRule"/>
</dbReference>
<dbReference type="GO" id="GO:0051745">
    <property type="term" value="F:4-hydroxy-3-methylbut-2-enyl diphosphate reductase activity"/>
    <property type="evidence" value="ECO:0007669"/>
    <property type="project" value="UniProtKB-UniRule"/>
</dbReference>
<dbReference type="GO" id="GO:0046872">
    <property type="term" value="F:metal ion binding"/>
    <property type="evidence" value="ECO:0007669"/>
    <property type="project" value="UniProtKB-KW"/>
</dbReference>
<dbReference type="GO" id="GO:0050992">
    <property type="term" value="P:dimethylallyl diphosphate biosynthetic process"/>
    <property type="evidence" value="ECO:0007669"/>
    <property type="project" value="UniProtKB-UniRule"/>
</dbReference>
<dbReference type="GO" id="GO:0019288">
    <property type="term" value="P:isopentenyl diphosphate biosynthetic process, methylerythritol 4-phosphate pathway"/>
    <property type="evidence" value="ECO:0007669"/>
    <property type="project" value="UniProtKB-UniRule"/>
</dbReference>
<dbReference type="GO" id="GO:0016114">
    <property type="term" value="P:terpenoid biosynthetic process"/>
    <property type="evidence" value="ECO:0007669"/>
    <property type="project" value="UniProtKB-UniRule"/>
</dbReference>
<dbReference type="CDD" id="cd13944">
    <property type="entry name" value="lytB_ispH"/>
    <property type="match status" value="1"/>
</dbReference>
<dbReference type="FunFam" id="3.40.1010.20:FF:000001">
    <property type="entry name" value="4-hydroxy-3-methylbut-2-enyl diphosphate reductase"/>
    <property type="match status" value="1"/>
</dbReference>
<dbReference type="FunFam" id="3.40.50.11270:FF:000001">
    <property type="entry name" value="4-hydroxy-3-methylbut-2-enyl diphosphate reductase"/>
    <property type="match status" value="1"/>
</dbReference>
<dbReference type="Gene3D" id="3.40.50.11270">
    <property type="match status" value="1"/>
</dbReference>
<dbReference type="Gene3D" id="3.40.1010.20">
    <property type="entry name" value="4-hydroxy-3-methylbut-2-enyl diphosphate reductase, catalytic domain"/>
    <property type="match status" value="2"/>
</dbReference>
<dbReference type="HAMAP" id="MF_00191">
    <property type="entry name" value="IspH"/>
    <property type="match status" value="1"/>
</dbReference>
<dbReference type="InterPro" id="IPR003451">
    <property type="entry name" value="LytB/IspH"/>
</dbReference>
<dbReference type="NCBIfam" id="TIGR00216">
    <property type="entry name" value="ispH_lytB"/>
    <property type="match status" value="1"/>
</dbReference>
<dbReference type="NCBIfam" id="NF002188">
    <property type="entry name" value="PRK01045.1-2"/>
    <property type="match status" value="1"/>
</dbReference>
<dbReference type="NCBIfam" id="NF002190">
    <property type="entry name" value="PRK01045.1-4"/>
    <property type="match status" value="1"/>
</dbReference>
<dbReference type="PANTHER" id="PTHR30426">
    <property type="entry name" value="4-HYDROXY-3-METHYLBUT-2-ENYL DIPHOSPHATE REDUCTASE"/>
    <property type="match status" value="1"/>
</dbReference>
<dbReference type="PANTHER" id="PTHR30426:SF0">
    <property type="entry name" value="4-HYDROXY-3-METHYLBUT-2-ENYL DIPHOSPHATE REDUCTASE"/>
    <property type="match status" value="1"/>
</dbReference>
<dbReference type="Pfam" id="PF02401">
    <property type="entry name" value="LYTB"/>
    <property type="match status" value="1"/>
</dbReference>
<proteinExistence type="inferred from homology"/>
<keyword id="KW-0004">4Fe-4S</keyword>
<keyword id="KW-0408">Iron</keyword>
<keyword id="KW-0411">Iron-sulfur</keyword>
<keyword id="KW-0414">Isoprene biosynthesis</keyword>
<keyword id="KW-0479">Metal-binding</keyword>
<keyword id="KW-0560">Oxidoreductase</keyword>
<sequence length="316" mass="34775">MQILLANPRGFCAGVDRAISIVENALAIYGAPIYVRHEVVHNRYVVDSLRERGAIFIEQISEVPDGAILIFSAHGVSQAVRNEAKSRDLTVFDATCPLVTKVHMEVARASRRGEESILIGHAGHPEVEGTMGQYSNPEGGMYLVESPDDVWKLTVKNEEKLSFMTQTTLSVDDTSDVIDALRKRFPKIVGPRKDDICYATTNRQEAVRALAEQAEVVLVVGSKNSSNSNRLAELAQRMGKRAFLIDDAKDIQEEWVKEVKCVGVTAGASAPDILVQNVVARLQQLGGGEAIPLEGREENIVFEVPKELRVDIREVD</sequence>
<name>ISPH_SHIBS</name>
<accession>Q326J4</accession>
<protein>
    <recommendedName>
        <fullName evidence="1">4-hydroxy-3-methylbut-2-enyl diphosphate reductase</fullName>
        <shortName evidence="1">HMBPP reductase</shortName>
        <ecNumber evidence="1">1.17.7.4</ecNumber>
    </recommendedName>
</protein>